<gene>
    <name evidence="1" type="primary">cysD</name>
    <name type="ordered locus">SARI_00021</name>
</gene>
<accession>A9MF23</accession>
<dbReference type="EC" id="2.7.7.4" evidence="1"/>
<dbReference type="EMBL" id="CP000880">
    <property type="protein sequence ID" value="ABX19975.1"/>
    <property type="molecule type" value="Genomic_DNA"/>
</dbReference>
<dbReference type="SMR" id="A9MF23"/>
<dbReference type="STRING" id="41514.SARI_00021"/>
<dbReference type="KEGG" id="ses:SARI_00021"/>
<dbReference type="HOGENOM" id="CLU_043026_0_0_6"/>
<dbReference type="UniPathway" id="UPA00140">
    <property type="reaction ID" value="UER00204"/>
</dbReference>
<dbReference type="Proteomes" id="UP000002084">
    <property type="component" value="Chromosome"/>
</dbReference>
<dbReference type="GO" id="GO:0005524">
    <property type="term" value="F:ATP binding"/>
    <property type="evidence" value="ECO:0007669"/>
    <property type="project" value="UniProtKB-KW"/>
</dbReference>
<dbReference type="GO" id="GO:0004781">
    <property type="term" value="F:sulfate adenylyltransferase (ATP) activity"/>
    <property type="evidence" value="ECO:0007669"/>
    <property type="project" value="UniProtKB-UniRule"/>
</dbReference>
<dbReference type="GO" id="GO:0070814">
    <property type="term" value="P:hydrogen sulfide biosynthetic process"/>
    <property type="evidence" value="ECO:0007669"/>
    <property type="project" value="UniProtKB-UniRule"/>
</dbReference>
<dbReference type="GO" id="GO:0000103">
    <property type="term" value="P:sulfate assimilation"/>
    <property type="evidence" value="ECO:0007669"/>
    <property type="project" value="UniProtKB-UniRule"/>
</dbReference>
<dbReference type="CDD" id="cd23946">
    <property type="entry name" value="Sulfate_adenylyltransferase_2"/>
    <property type="match status" value="1"/>
</dbReference>
<dbReference type="FunFam" id="3.40.50.620:FF:000002">
    <property type="entry name" value="Sulfate adenylyltransferase subunit 2"/>
    <property type="match status" value="1"/>
</dbReference>
<dbReference type="Gene3D" id="3.40.50.620">
    <property type="entry name" value="HUPs"/>
    <property type="match status" value="1"/>
</dbReference>
<dbReference type="HAMAP" id="MF_00064">
    <property type="entry name" value="Sulf_adenylyltr_sub2"/>
    <property type="match status" value="1"/>
</dbReference>
<dbReference type="InterPro" id="IPR002500">
    <property type="entry name" value="PAPS_reduct_dom"/>
</dbReference>
<dbReference type="InterPro" id="IPR014729">
    <property type="entry name" value="Rossmann-like_a/b/a_fold"/>
</dbReference>
<dbReference type="InterPro" id="IPR011784">
    <property type="entry name" value="SO4_adenylTrfase_ssu"/>
</dbReference>
<dbReference type="InterPro" id="IPR050128">
    <property type="entry name" value="Sulfate_adenylyltrnsfr_sub2"/>
</dbReference>
<dbReference type="NCBIfam" id="TIGR02039">
    <property type="entry name" value="CysD"/>
    <property type="match status" value="1"/>
</dbReference>
<dbReference type="NCBIfam" id="NF003587">
    <property type="entry name" value="PRK05253.1"/>
    <property type="match status" value="1"/>
</dbReference>
<dbReference type="NCBIfam" id="NF009214">
    <property type="entry name" value="PRK12563.1"/>
    <property type="match status" value="1"/>
</dbReference>
<dbReference type="PANTHER" id="PTHR43196">
    <property type="entry name" value="SULFATE ADENYLYLTRANSFERASE SUBUNIT 2"/>
    <property type="match status" value="1"/>
</dbReference>
<dbReference type="PANTHER" id="PTHR43196:SF1">
    <property type="entry name" value="SULFATE ADENYLYLTRANSFERASE SUBUNIT 2"/>
    <property type="match status" value="1"/>
</dbReference>
<dbReference type="Pfam" id="PF01507">
    <property type="entry name" value="PAPS_reduct"/>
    <property type="match status" value="1"/>
</dbReference>
<dbReference type="PIRSF" id="PIRSF002936">
    <property type="entry name" value="CysDAde_trans"/>
    <property type="match status" value="1"/>
</dbReference>
<dbReference type="SUPFAM" id="SSF52402">
    <property type="entry name" value="Adenine nucleotide alpha hydrolases-like"/>
    <property type="match status" value="1"/>
</dbReference>
<keyword id="KW-0067">ATP-binding</keyword>
<keyword id="KW-0547">Nucleotide-binding</keyword>
<keyword id="KW-0548">Nucleotidyltransferase</keyword>
<keyword id="KW-1185">Reference proteome</keyword>
<keyword id="KW-0808">Transferase</keyword>
<evidence type="ECO:0000255" key="1">
    <source>
        <dbReference type="HAMAP-Rule" id="MF_00064"/>
    </source>
</evidence>
<proteinExistence type="inferred from homology"/>
<reference key="1">
    <citation type="submission" date="2007-11" db="EMBL/GenBank/DDBJ databases">
        <authorList>
            <consortium name="The Salmonella enterica serovar Arizonae Genome Sequencing Project"/>
            <person name="McClelland M."/>
            <person name="Sanderson E.K."/>
            <person name="Porwollik S."/>
            <person name="Spieth J."/>
            <person name="Clifton W.S."/>
            <person name="Fulton R."/>
            <person name="Chunyan W."/>
            <person name="Wollam A."/>
            <person name="Shah N."/>
            <person name="Pepin K."/>
            <person name="Bhonagiri V."/>
            <person name="Nash W."/>
            <person name="Johnson M."/>
            <person name="Thiruvilangam P."/>
            <person name="Wilson R."/>
        </authorList>
    </citation>
    <scope>NUCLEOTIDE SEQUENCE [LARGE SCALE GENOMIC DNA]</scope>
    <source>
        <strain>ATCC BAA-731 / CDC346-86 / RSK2980</strain>
    </source>
</reference>
<name>CYSD_SALAR</name>
<comment type="function">
    <text evidence="1">With CysN forms the ATP sulfurylase (ATPS) that catalyzes the adenylation of sulfate producing adenosine 5'-phosphosulfate (APS) and diphosphate, the first enzymatic step in sulfur assimilation pathway. APS synthesis involves the formation of a high-energy phosphoric-sulfuric acid anhydride bond driven by GTP hydrolysis by CysN coupled to ATP hydrolysis by CysD.</text>
</comment>
<comment type="catalytic activity">
    <reaction evidence="1">
        <text>sulfate + ATP + H(+) = adenosine 5'-phosphosulfate + diphosphate</text>
        <dbReference type="Rhea" id="RHEA:18133"/>
        <dbReference type="ChEBI" id="CHEBI:15378"/>
        <dbReference type="ChEBI" id="CHEBI:16189"/>
        <dbReference type="ChEBI" id="CHEBI:30616"/>
        <dbReference type="ChEBI" id="CHEBI:33019"/>
        <dbReference type="ChEBI" id="CHEBI:58243"/>
        <dbReference type="EC" id="2.7.7.4"/>
    </reaction>
</comment>
<comment type="pathway">
    <text evidence="1">Sulfur metabolism; hydrogen sulfide biosynthesis; sulfite from sulfate: step 1/3.</text>
</comment>
<comment type="subunit">
    <text evidence="1">Heterodimer composed of CysD, the smaller subunit, and CysN.</text>
</comment>
<comment type="similarity">
    <text evidence="1">Belongs to the PAPS reductase family. CysD subfamily.</text>
</comment>
<protein>
    <recommendedName>
        <fullName evidence="1">Sulfate adenylyltransferase subunit 2</fullName>
        <ecNumber evidence="1">2.7.7.4</ecNumber>
    </recommendedName>
    <alternativeName>
        <fullName evidence="1">ATP-sulfurylase small subunit</fullName>
    </alternativeName>
    <alternativeName>
        <fullName evidence="1">Sulfate adenylate transferase</fullName>
        <shortName evidence="1">SAT</shortName>
    </alternativeName>
</protein>
<feature type="chain" id="PRO_1000075080" description="Sulfate adenylyltransferase subunit 2">
    <location>
        <begin position="1"/>
        <end position="302"/>
    </location>
</feature>
<organism>
    <name type="scientific">Salmonella arizonae (strain ATCC BAA-731 / CDC346-86 / RSK2980)</name>
    <dbReference type="NCBI Taxonomy" id="41514"/>
    <lineage>
        <taxon>Bacteria</taxon>
        <taxon>Pseudomonadati</taxon>
        <taxon>Pseudomonadota</taxon>
        <taxon>Gammaproteobacteria</taxon>
        <taxon>Enterobacterales</taxon>
        <taxon>Enterobacteriaceae</taxon>
        <taxon>Salmonella</taxon>
    </lineage>
</organism>
<sequence length="302" mass="35219">MDQKRLTHLRQLEAESIHIIREVAAEFANPVMLYSIGKDSSVMLHLARKAFYPGTLPFPLLHVDTGWKFREMYAFRDRTANTYGCELLVHKNPEGVAMDINPFVHGSAKHTDIMKTEGLKQALNKYGFDAAFGGARRDEEKSRAKERIYSFRDRFHRWDPKNQRPELWRNYNGQINTGESIRVFPLSNWTEQDIWQYIWLENIEIVPLYLAAERPVLERDGMLMMVDDDRIDLQPGEVIKKRMVRFRTLGCWPLTGAVESHAQTLPEIIEEMLVSTTSERQGRVIDRDQAGSMELKKRQGYF</sequence>